<reference key="1">
    <citation type="submission" date="1999-12" db="EMBL/GenBank/DDBJ databases">
        <title>Propionibacterium acnes hsp60 gene.</title>
        <authorList>
            <person name="Cho Y."/>
        </authorList>
    </citation>
    <scope>NUCLEOTIDE SEQUENCE [GENOMIC DNA]</scope>
</reference>
<reference key="2">
    <citation type="submission" date="2000-01" db="EMBL/GenBank/DDBJ databases">
        <title>Cloning and sequencing of a groEL homolog from Propionibacterium acnes.</title>
        <authorList>
            <person name="Farrar M.D."/>
            <person name="Ingham E."/>
            <person name="Holland K.T."/>
        </authorList>
    </citation>
    <scope>NUCLEOTIDE SEQUENCE [GENOMIC DNA]</scope>
    <source>
        <strain>P37</strain>
    </source>
</reference>
<accession>P0CY96</accession>
<accession>Q9K2U4</accession>
<feature type="chain" id="PRO_0000410484" description="Chaperonin GroEL">
    <location>
        <begin position="1"/>
        <end position="544"/>
    </location>
</feature>
<feature type="region of interest" description="Disordered" evidence="2">
    <location>
        <begin position="523"/>
        <end position="544"/>
    </location>
</feature>
<feature type="compositionally biased region" description="Gly residues" evidence="2">
    <location>
        <begin position="529"/>
        <end position="544"/>
    </location>
</feature>
<feature type="binding site" evidence="1">
    <location>
        <begin position="29"/>
        <end position="32"/>
    </location>
    <ligand>
        <name>ATP</name>
        <dbReference type="ChEBI" id="CHEBI:30616"/>
    </ligand>
</feature>
<feature type="binding site" evidence="1">
    <location>
        <begin position="86"/>
        <end position="90"/>
    </location>
    <ligand>
        <name>ATP</name>
        <dbReference type="ChEBI" id="CHEBI:30616"/>
    </ligand>
</feature>
<feature type="binding site" evidence="1">
    <location>
        <position position="413"/>
    </location>
    <ligand>
        <name>ATP</name>
        <dbReference type="ChEBI" id="CHEBI:30616"/>
    </ligand>
</feature>
<feature type="binding site" evidence="1">
    <location>
        <begin position="476"/>
        <end position="478"/>
    </location>
    <ligand>
        <name>ATP</name>
        <dbReference type="ChEBI" id="CHEBI:30616"/>
    </ligand>
</feature>
<feature type="binding site" evidence="1">
    <location>
        <position position="492"/>
    </location>
    <ligand>
        <name>ATP</name>
        <dbReference type="ChEBI" id="CHEBI:30616"/>
    </ligand>
</feature>
<dbReference type="EC" id="5.6.1.7" evidence="1"/>
<dbReference type="EMBL" id="AB036414">
    <property type="protein sequence ID" value="BAA92382.1"/>
    <property type="molecule type" value="Genomic_DNA"/>
</dbReference>
<dbReference type="EMBL" id="AF222061">
    <property type="protein sequence ID" value="AAF33788.1"/>
    <property type="molecule type" value="Genomic_DNA"/>
</dbReference>
<dbReference type="RefSeq" id="WP_002516697.1">
    <property type="nucleotide sequence ID" value="NZ_WQNV01000002.1"/>
</dbReference>
<dbReference type="SMR" id="P0CY96"/>
<dbReference type="GeneID" id="92856426"/>
<dbReference type="PATRIC" id="fig|1747.45.peg.251"/>
<dbReference type="OMA" id="TDTDKME"/>
<dbReference type="OrthoDB" id="9766614at2"/>
<dbReference type="GO" id="GO:0005737">
    <property type="term" value="C:cytoplasm"/>
    <property type="evidence" value="ECO:0007669"/>
    <property type="project" value="UniProtKB-SubCell"/>
</dbReference>
<dbReference type="GO" id="GO:0005524">
    <property type="term" value="F:ATP binding"/>
    <property type="evidence" value="ECO:0007669"/>
    <property type="project" value="UniProtKB-UniRule"/>
</dbReference>
<dbReference type="GO" id="GO:0140662">
    <property type="term" value="F:ATP-dependent protein folding chaperone"/>
    <property type="evidence" value="ECO:0007669"/>
    <property type="project" value="InterPro"/>
</dbReference>
<dbReference type="GO" id="GO:0016853">
    <property type="term" value="F:isomerase activity"/>
    <property type="evidence" value="ECO:0007669"/>
    <property type="project" value="UniProtKB-KW"/>
</dbReference>
<dbReference type="GO" id="GO:0051082">
    <property type="term" value="F:unfolded protein binding"/>
    <property type="evidence" value="ECO:0007669"/>
    <property type="project" value="UniProtKB-UniRule"/>
</dbReference>
<dbReference type="GO" id="GO:0042026">
    <property type="term" value="P:protein refolding"/>
    <property type="evidence" value="ECO:0007669"/>
    <property type="project" value="UniProtKB-UniRule"/>
</dbReference>
<dbReference type="CDD" id="cd03344">
    <property type="entry name" value="GroEL"/>
    <property type="match status" value="1"/>
</dbReference>
<dbReference type="FunFam" id="3.50.7.10:FF:000001">
    <property type="entry name" value="60 kDa chaperonin"/>
    <property type="match status" value="1"/>
</dbReference>
<dbReference type="Gene3D" id="3.50.7.10">
    <property type="entry name" value="GroEL"/>
    <property type="match status" value="1"/>
</dbReference>
<dbReference type="Gene3D" id="1.10.560.10">
    <property type="entry name" value="GroEL-like equatorial domain"/>
    <property type="match status" value="1"/>
</dbReference>
<dbReference type="Gene3D" id="3.30.260.10">
    <property type="entry name" value="TCP-1-like chaperonin intermediate domain"/>
    <property type="match status" value="1"/>
</dbReference>
<dbReference type="HAMAP" id="MF_00600">
    <property type="entry name" value="CH60"/>
    <property type="match status" value="1"/>
</dbReference>
<dbReference type="InterPro" id="IPR018370">
    <property type="entry name" value="Chaperonin_Cpn60_CS"/>
</dbReference>
<dbReference type="InterPro" id="IPR001844">
    <property type="entry name" value="Cpn60/GroEL"/>
</dbReference>
<dbReference type="InterPro" id="IPR002423">
    <property type="entry name" value="Cpn60/GroEL/TCP-1"/>
</dbReference>
<dbReference type="InterPro" id="IPR027409">
    <property type="entry name" value="GroEL-like_apical_dom_sf"/>
</dbReference>
<dbReference type="InterPro" id="IPR027413">
    <property type="entry name" value="GROEL-like_equatorial_sf"/>
</dbReference>
<dbReference type="InterPro" id="IPR027410">
    <property type="entry name" value="TCP-1-like_intermed_sf"/>
</dbReference>
<dbReference type="NCBIfam" id="TIGR02348">
    <property type="entry name" value="GroEL"/>
    <property type="match status" value="1"/>
</dbReference>
<dbReference type="NCBIfam" id="NF000592">
    <property type="entry name" value="PRK00013.1"/>
    <property type="match status" value="1"/>
</dbReference>
<dbReference type="NCBIfam" id="NF009487">
    <property type="entry name" value="PRK12849.1"/>
    <property type="match status" value="1"/>
</dbReference>
<dbReference type="NCBIfam" id="NF009488">
    <property type="entry name" value="PRK12850.1"/>
    <property type="match status" value="1"/>
</dbReference>
<dbReference type="NCBIfam" id="NF009489">
    <property type="entry name" value="PRK12851.1"/>
    <property type="match status" value="1"/>
</dbReference>
<dbReference type="PANTHER" id="PTHR45633">
    <property type="entry name" value="60 KDA HEAT SHOCK PROTEIN, MITOCHONDRIAL"/>
    <property type="match status" value="1"/>
</dbReference>
<dbReference type="Pfam" id="PF00118">
    <property type="entry name" value="Cpn60_TCP1"/>
    <property type="match status" value="1"/>
</dbReference>
<dbReference type="PRINTS" id="PR00298">
    <property type="entry name" value="CHAPERONIN60"/>
</dbReference>
<dbReference type="SUPFAM" id="SSF52029">
    <property type="entry name" value="GroEL apical domain-like"/>
    <property type="match status" value="1"/>
</dbReference>
<dbReference type="SUPFAM" id="SSF48592">
    <property type="entry name" value="GroEL equatorial domain-like"/>
    <property type="match status" value="1"/>
</dbReference>
<dbReference type="SUPFAM" id="SSF54849">
    <property type="entry name" value="GroEL-intermediate domain like"/>
    <property type="match status" value="1"/>
</dbReference>
<dbReference type="PROSITE" id="PS00296">
    <property type="entry name" value="CHAPERONINS_CPN60"/>
    <property type="match status" value="1"/>
</dbReference>
<name>CH60_CUTAC</name>
<keyword id="KW-0067">ATP-binding</keyword>
<keyword id="KW-0143">Chaperone</keyword>
<keyword id="KW-0963">Cytoplasm</keyword>
<keyword id="KW-0413">Isomerase</keyword>
<keyword id="KW-0547">Nucleotide-binding</keyword>
<organism>
    <name type="scientific">Cutibacterium acnes</name>
    <name type="common">Propionibacterium acnes</name>
    <dbReference type="NCBI Taxonomy" id="1747"/>
    <lineage>
        <taxon>Bacteria</taxon>
        <taxon>Bacillati</taxon>
        <taxon>Actinomycetota</taxon>
        <taxon>Actinomycetes</taxon>
        <taxon>Propionibacteriales</taxon>
        <taxon>Propionibacteriaceae</taxon>
        <taxon>Cutibacterium</taxon>
    </lineage>
</organism>
<gene>
    <name evidence="1" type="primary">groEL</name>
    <name evidence="1" type="synonym">groL</name>
    <name type="synonym">hsp60</name>
</gene>
<comment type="function">
    <text evidence="1">Together with its co-chaperonin GroES, plays an essential role in assisting protein folding. The GroEL-GroES system forms a nano-cage that allows encapsulation of the non-native substrate proteins and provides a physical environment optimized to promote and accelerate protein folding.</text>
</comment>
<comment type="catalytic activity">
    <reaction evidence="1">
        <text>ATP + H2O + a folded polypeptide = ADP + phosphate + an unfolded polypeptide.</text>
        <dbReference type="EC" id="5.6.1.7"/>
    </reaction>
</comment>
<comment type="subunit">
    <text evidence="1">Forms a cylinder of 14 subunits composed of two heptameric rings stacked back-to-back. Interacts with the co-chaperonin GroES.</text>
</comment>
<comment type="subcellular location">
    <subcellularLocation>
        <location evidence="1">Cytoplasm</location>
    </subcellularLocation>
</comment>
<comment type="similarity">
    <text evidence="1">Belongs to the chaperonin (HSP60) family.</text>
</comment>
<sequence length="544" mass="56840">MAKLIEFNIEARRGLEAGMNTLADAVKVTLGPKGRNVVLEKSWGAPTITNDGVSIAKEIELDDPYEKIGAELVKEVAKKTDDVAGDGTTTATVLAQAMVREGLRNVTAGANPMGLKKGIEAAVQAVSARLSDMAIDIETKDQIASTASISAADPTVGEIIAEAMDKVGKEGVITVEESNTFGLELELTEGMRFDKGYISPYFVTDTERMEAVLEDPYILIVNSKISSLKDLLPVLEKVMQSGKPLFVIAEDVEGEALAGLIVNKIRGTFKSVAVKAPGFGDRRKAMLNDIAILTGGQVISEEVGLSLDAVTLDLLGRARQVVVTKDEATIVDGAGDSEQIAGRVSQIRKEIENSDSDYDREKLQERLAKLAGGVAVIKVGAATEVELKERKHRIEDAVRNAKAAVEEGIIPGGGVALLQASKAAEIEGLEGDELTGAQIVLAACTAPLKQIAINAGLEGGVVAEKVAGLPAGQGLNAANDEYVDMVEAGIIDPAKVTRSALQNAASIAALFLTTEAVIADKPEPVKAPAGGGDMDGMGGMGGMM</sequence>
<protein>
    <recommendedName>
        <fullName evidence="1">Chaperonin GroEL</fullName>
        <ecNumber evidence="1">5.6.1.7</ecNumber>
    </recommendedName>
    <alternativeName>
        <fullName evidence="1">60 kDa chaperonin</fullName>
    </alternativeName>
    <alternativeName>
        <fullName evidence="1">Chaperonin-60</fullName>
        <shortName evidence="1">Cpn60</shortName>
    </alternativeName>
</protein>
<proteinExistence type="inferred from homology"/>
<evidence type="ECO:0000255" key="1">
    <source>
        <dbReference type="HAMAP-Rule" id="MF_00600"/>
    </source>
</evidence>
<evidence type="ECO:0000256" key="2">
    <source>
        <dbReference type="SAM" id="MobiDB-lite"/>
    </source>
</evidence>